<organism>
    <name type="scientific">Mycobacterium leprae (strain TN)</name>
    <dbReference type="NCBI Taxonomy" id="272631"/>
    <lineage>
        <taxon>Bacteria</taxon>
        <taxon>Bacillati</taxon>
        <taxon>Actinomycetota</taxon>
        <taxon>Actinomycetes</taxon>
        <taxon>Mycobacteriales</taxon>
        <taxon>Mycobacteriaceae</taxon>
        <taxon>Mycobacterium</taxon>
    </lineage>
</organism>
<feature type="chain" id="PRO_0000145158" description="DNA topoisomerase 1">
    <location>
        <begin position="1"/>
        <end position="947"/>
    </location>
</feature>
<feature type="domain" description="Toprim" evidence="1">
    <location>
        <begin position="16"/>
        <end position="140"/>
    </location>
</feature>
<feature type="domain" description="Topo IA-type catalytic" evidence="2">
    <location>
        <begin position="155"/>
        <end position="614"/>
    </location>
</feature>
<feature type="region of interest" description="Interaction with DNA" evidence="1">
    <location>
        <begin position="189"/>
        <end position="194"/>
    </location>
</feature>
<feature type="region of interest" description="Disordered" evidence="3">
    <location>
        <begin position="733"/>
        <end position="771"/>
    </location>
</feature>
<feature type="region of interest" description="Disordered" evidence="3">
    <location>
        <begin position="846"/>
        <end position="888"/>
    </location>
</feature>
<feature type="region of interest" description="Disordered" evidence="3">
    <location>
        <begin position="910"/>
        <end position="947"/>
    </location>
</feature>
<feature type="compositionally biased region" description="Basic residues" evidence="3">
    <location>
        <begin position="915"/>
        <end position="934"/>
    </location>
</feature>
<feature type="active site" description="O-(5'-phospho-DNA)-tyrosine intermediate" evidence="2">
    <location>
        <position position="343"/>
    </location>
</feature>
<feature type="binding site" evidence="1">
    <location>
        <position position="22"/>
    </location>
    <ligand>
        <name>Mg(2+)</name>
        <dbReference type="ChEBI" id="CHEBI:18420"/>
        <note>catalytic</note>
    </ligand>
</feature>
<feature type="binding site" evidence="1">
    <location>
        <position position="109"/>
    </location>
    <ligand>
        <name>Mg(2+)</name>
        <dbReference type="ChEBI" id="CHEBI:18420"/>
        <note>catalytic</note>
    </ligand>
</feature>
<feature type="site" description="Interaction with DNA" evidence="1">
    <location>
        <position position="46"/>
    </location>
</feature>
<feature type="site" description="Interaction with DNA" evidence="1">
    <location>
        <position position="165"/>
    </location>
</feature>
<feature type="site" description="Interaction with DNA" evidence="1">
    <location>
        <position position="166"/>
    </location>
</feature>
<feature type="site" description="Interaction with DNA" evidence="1">
    <location>
        <position position="169"/>
    </location>
</feature>
<feature type="site" description="Interaction with DNA" evidence="1">
    <location>
        <position position="174"/>
    </location>
</feature>
<feature type="site" description="Interaction with DNA" evidence="1">
    <location>
        <position position="181"/>
    </location>
</feature>
<feature type="site" description="Interaction with DNA" evidence="1">
    <location>
        <position position="345"/>
    </location>
</feature>
<feature type="site" description="Interaction with DNA" evidence="1">
    <location>
        <position position="545"/>
    </location>
</feature>
<sequence length="947" mass="104056">MKGPRGSRSGRNGSPRRLVIVESPTKARKLSGYLGSAYIVESSRGHIRDLPRTAADVPAKFKSEPWARLGVNVDADFEPLYIITPEKKSTVTELKGLLQGVDELYLATDGDREGEAIAWHLMQTLKPRVPVKRMVFHEITEHAILAAAAHPRELDIDLVDAQETRRILDRLYGYEVSPVLWKKVAPKLSAGRVQSVATRIIVQRERDRMAFCSAVYWDIVAKLDASVSDPTAQPLTFVARLTAVDGLRVATGRDFGAMGTLRGDCEVSKIIVLDDLTATTLAAGLRGAQLTVASAEEKLYTRRPYPPFMTSTLQQEAGRKLRFSAERTMSIAQRLYENGYITYMRTDSTTLSESAINAARTQARQLYGEEYVSDSPRQYTRKVKNAQEAHEAIRPAGETFATPDAVCNELDGDEFRIYELVWRRTVASQMADARGTTLSLRIEGRAGEQHVVFSASGRTLTFPGFLKAYVETVDELAGGEADDAERRLPHLTSGQLLDVIDLTPDGHATNPPARYTEASLVKALEELGIGRPSTYSSIIKTVQDRGYVQKKGSALVPSWVAFAVTGLLEQHFGRLVDYDFTAAMEDELDEIANGNEQRTNWLNNFYFGGNHGVSDSIARSGGLKKLVGVNIEGIDAREVNSIKLFDDEHGRPVYVRVGKTGPYLERLLAGDDGELTPQRANLNGTLTPDELTLEVAEELFATPHEGRVLGVDPETGHEIVAKDGRYGPYVTEVLPKHDDDYGAADQGTKKTKKGRRASASQGPKPRTGSLLRSMDLQTITLEDALKLLLLPRVVGVDPASGEEITAQNGRYGPYLKRGKDSRPLTTEDQMFIITLDEALKIYAEPKRAGRQSTSPPPLRELGTDPTSGKPMLIKDGRFGPYVTDGETNASLRKGDDVVSITDERAAELLADRRARGPVKRPAKKARKVPAKKAARLAPARGISQSPR</sequence>
<proteinExistence type="inferred from homology"/>
<keyword id="KW-0238">DNA-binding</keyword>
<keyword id="KW-0413">Isomerase</keyword>
<keyword id="KW-0460">Magnesium</keyword>
<keyword id="KW-0479">Metal-binding</keyword>
<keyword id="KW-1185">Reference proteome</keyword>
<keyword id="KW-0799">Topoisomerase</keyword>
<accession>O69548</accession>
<name>TOP1_MYCLE</name>
<gene>
    <name evidence="1" type="primary">topA</name>
    <name type="ordered locus">ML0200</name>
    <name type="ORF">MLCB2548.31c</name>
</gene>
<evidence type="ECO:0000255" key="1">
    <source>
        <dbReference type="HAMAP-Rule" id="MF_00952"/>
    </source>
</evidence>
<evidence type="ECO:0000255" key="2">
    <source>
        <dbReference type="PROSITE-ProRule" id="PRU01383"/>
    </source>
</evidence>
<evidence type="ECO:0000256" key="3">
    <source>
        <dbReference type="SAM" id="MobiDB-lite"/>
    </source>
</evidence>
<reference key="1">
    <citation type="journal article" date="2001" name="Nature">
        <title>Massive gene decay in the leprosy bacillus.</title>
        <authorList>
            <person name="Cole S.T."/>
            <person name="Eiglmeier K."/>
            <person name="Parkhill J."/>
            <person name="James K.D."/>
            <person name="Thomson N.R."/>
            <person name="Wheeler P.R."/>
            <person name="Honore N."/>
            <person name="Garnier T."/>
            <person name="Churcher C.M."/>
            <person name="Harris D.E."/>
            <person name="Mungall K.L."/>
            <person name="Basham D."/>
            <person name="Brown D."/>
            <person name="Chillingworth T."/>
            <person name="Connor R."/>
            <person name="Davies R.M."/>
            <person name="Devlin K."/>
            <person name="Duthoy S."/>
            <person name="Feltwell T."/>
            <person name="Fraser A."/>
            <person name="Hamlin N."/>
            <person name="Holroyd S."/>
            <person name="Hornsby T."/>
            <person name="Jagels K."/>
            <person name="Lacroix C."/>
            <person name="Maclean J."/>
            <person name="Moule S."/>
            <person name="Murphy L.D."/>
            <person name="Oliver K."/>
            <person name="Quail M.A."/>
            <person name="Rajandream M.A."/>
            <person name="Rutherford K.M."/>
            <person name="Rutter S."/>
            <person name="Seeger K."/>
            <person name="Simon S."/>
            <person name="Simmonds M."/>
            <person name="Skelton J."/>
            <person name="Squares R."/>
            <person name="Squares S."/>
            <person name="Stevens K."/>
            <person name="Taylor K."/>
            <person name="Whitehead S."/>
            <person name="Woodward J.R."/>
            <person name="Barrell B.G."/>
        </authorList>
    </citation>
    <scope>NUCLEOTIDE SEQUENCE [LARGE SCALE GENOMIC DNA]</scope>
    <source>
        <strain>TN</strain>
    </source>
</reference>
<comment type="function">
    <text evidence="1">Releases the supercoiling and torsional tension of DNA, which is introduced during the DNA replication and transcription, by transiently cleaving and rejoining one strand of the DNA duplex. Introduces a single-strand break via transesterification at a target site in duplex DNA. The scissile phosphodiester is attacked by the catalytic tyrosine of the enzyme, resulting in the formation of a DNA-(5'-phosphotyrosyl)-enzyme intermediate and the expulsion of a 3'-OH DNA strand. The free DNA strand then undergoes passage around the unbroken strand, thus removing DNA supercoils. Finally, in the religation step, the DNA 3'-OH attacks the covalent intermediate to expel the active-site tyrosine and restore the DNA phosphodiester backbone.</text>
</comment>
<comment type="catalytic activity">
    <reaction evidence="1">
        <text>ATP-independent breakage of single-stranded DNA, followed by passage and rejoining.</text>
        <dbReference type="EC" id="5.6.2.1"/>
    </reaction>
</comment>
<comment type="cofactor">
    <cofactor evidence="1">
        <name>Mg(2+)</name>
        <dbReference type="ChEBI" id="CHEBI:18420"/>
    </cofactor>
</comment>
<comment type="subunit">
    <text evidence="1">Monomer.</text>
</comment>
<comment type="similarity">
    <text evidence="1">Belongs to the type IA topoisomerase family.</text>
</comment>
<protein>
    <recommendedName>
        <fullName evidence="1">DNA topoisomerase 1</fullName>
        <ecNumber evidence="1">5.6.2.1</ecNumber>
    </recommendedName>
    <alternativeName>
        <fullName evidence="1">DNA topoisomerase I</fullName>
    </alternativeName>
    <alternativeName>
        <fullName>Omega-protein</fullName>
    </alternativeName>
    <alternativeName>
        <fullName>Relaxing enzyme</fullName>
    </alternativeName>
    <alternativeName>
        <fullName>Swivelase</fullName>
    </alternativeName>
    <alternativeName>
        <fullName>Untwisting enzyme</fullName>
    </alternativeName>
</protein>
<dbReference type="EC" id="5.6.2.1" evidence="1"/>
<dbReference type="EMBL" id="AL023093">
    <property type="protein sequence ID" value="CAA18818.1"/>
    <property type="molecule type" value="Genomic_DNA"/>
</dbReference>
<dbReference type="EMBL" id="AL583917">
    <property type="protein sequence ID" value="CAC29708.1"/>
    <property type="molecule type" value="Genomic_DNA"/>
</dbReference>
<dbReference type="PIR" id="H86933">
    <property type="entry name" value="H86933"/>
</dbReference>
<dbReference type="RefSeq" id="NP_301268.1">
    <property type="nucleotide sequence ID" value="NC_002677.1"/>
</dbReference>
<dbReference type="RefSeq" id="WP_010907592.1">
    <property type="nucleotide sequence ID" value="NC_002677.1"/>
</dbReference>
<dbReference type="SMR" id="O69548"/>
<dbReference type="STRING" id="272631.gene:17574016"/>
<dbReference type="KEGG" id="mle:ML0200"/>
<dbReference type="PATRIC" id="fig|272631.5.peg.318"/>
<dbReference type="Leproma" id="ML0200"/>
<dbReference type="eggNOG" id="COG0550">
    <property type="taxonomic scope" value="Bacteria"/>
</dbReference>
<dbReference type="eggNOG" id="COG1754">
    <property type="taxonomic scope" value="Bacteria"/>
</dbReference>
<dbReference type="HOGENOM" id="CLU_002929_2_0_11"/>
<dbReference type="OrthoDB" id="9804262at2"/>
<dbReference type="Proteomes" id="UP000000806">
    <property type="component" value="Chromosome"/>
</dbReference>
<dbReference type="GO" id="GO:0003677">
    <property type="term" value="F:DNA binding"/>
    <property type="evidence" value="ECO:0007669"/>
    <property type="project" value="UniProtKB-KW"/>
</dbReference>
<dbReference type="GO" id="GO:0003917">
    <property type="term" value="F:DNA topoisomerase type I (single strand cut, ATP-independent) activity"/>
    <property type="evidence" value="ECO:0007669"/>
    <property type="project" value="UniProtKB-UniRule"/>
</dbReference>
<dbReference type="GO" id="GO:0046872">
    <property type="term" value="F:metal ion binding"/>
    <property type="evidence" value="ECO:0007669"/>
    <property type="project" value="UniProtKB-KW"/>
</dbReference>
<dbReference type="GO" id="GO:0006265">
    <property type="term" value="P:DNA topological change"/>
    <property type="evidence" value="ECO:0007669"/>
    <property type="project" value="UniProtKB-UniRule"/>
</dbReference>
<dbReference type="CDD" id="cd00186">
    <property type="entry name" value="TOP1Ac"/>
    <property type="match status" value="1"/>
</dbReference>
<dbReference type="CDD" id="cd03363">
    <property type="entry name" value="TOPRIM_TopoIA_TopoI"/>
    <property type="match status" value="1"/>
</dbReference>
<dbReference type="FunFam" id="1.10.290.10:FF:000002">
    <property type="entry name" value="DNA topoisomerase 1"/>
    <property type="match status" value="1"/>
</dbReference>
<dbReference type="Gene3D" id="3.40.50.140">
    <property type="match status" value="1"/>
</dbReference>
<dbReference type="Gene3D" id="1.10.460.10">
    <property type="entry name" value="Topoisomerase I, domain 2"/>
    <property type="match status" value="1"/>
</dbReference>
<dbReference type="Gene3D" id="2.70.20.10">
    <property type="entry name" value="Topoisomerase I, domain 3"/>
    <property type="match status" value="1"/>
</dbReference>
<dbReference type="Gene3D" id="1.10.290.10">
    <property type="entry name" value="Topoisomerase I, domain 4"/>
    <property type="match status" value="1"/>
</dbReference>
<dbReference type="HAMAP" id="MF_00952">
    <property type="entry name" value="Topoisom_1_prok"/>
    <property type="match status" value="1"/>
</dbReference>
<dbReference type="InterPro" id="IPR000380">
    <property type="entry name" value="Topo_IA"/>
</dbReference>
<dbReference type="InterPro" id="IPR003601">
    <property type="entry name" value="Topo_IA_2"/>
</dbReference>
<dbReference type="InterPro" id="IPR023406">
    <property type="entry name" value="Topo_IA_AS"/>
</dbReference>
<dbReference type="InterPro" id="IPR013497">
    <property type="entry name" value="Topo_IA_cen"/>
</dbReference>
<dbReference type="InterPro" id="IPR013824">
    <property type="entry name" value="Topo_IA_cen_sub1"/>
</dbReference>
<dbReference type="InterPro" id="IPR013825">
    <property type="entry name" value="Topo_IA_cen_sub2"/>
</dbReference>
<dbReference type="InterPro" id="IPR013826">
    <property type="entry name" value="Topo_IA_cen_sub3"/>
</dbReference>
<dbReference type="InterPro" id="IPR023405">
    <property type="entry name" value="Topo_IA_core_domain"/>
</dbReference>
<dbReference type="InterPro" id="IPR003602">
    <property type="entry name" value="Topo_IA_DNA-bd_dom"/>
</dbReference>
<dbReference type="InterPro" id="IPR005733">
    <property type="entry name" value="TopoI_bac-type"/>
</dbReference>
<dbReference type="InterPro" id="IPR028612">
    <property type="entry name" value="Topoisom_1_IA"/>
</dbReference>
<dbReference type="InterPro" id="IPR025589">
    <property type="entry name" value="Toprim_C_rpt"/>
</dbReference>
<dbReference type="InterPro" id="IPR006171">
    <property type="entry name" value="TOPRIM_dom"/>
</dbReference>
<dbReference type="InterPro" id="IPR034149">
    <property type="entry name" value="TOPRIM_TopoI"/>
</dbReference>
<dbReference type="NCBIfam" id="TIGR01051">
    <property type="entry name" value="topA_bact"/>
    <property type="match status" value="1"/>
</dbReference>
<dbReference type="PANTHER" id="PTHR42785:SF1">
    <property type="entry name" value="DNA TOPOISOMERASE"/>
    <property type="match status" value="1"/>
</dbReference>
<dbReference type="PANTHER" id="PTHR42785">
    <property type="entry name" value="DNA TOPOISOMERASE, TYPE IA, CORE"/>
    <property type="match status" value="1"/>
</dbReference>
<dbReference type="Pfam" id="PF01131">
    <property type="entry name" value="Topoisom_bac"/>
    <property type="match status" value="1"/>
</dbReference>
<dbReference type="Pfam" id="PF01751">
    <property type="entry name" value="Toprim"/>
    <property type="match status" value="1"/>
</dbReference>
<dbReference type="Pfam" id="PF13368">
    <property type="entry name" value="Toprim_C_rpt"/>
    <property type="match status" value="4"/>
</dbReference>
<dbReference type="PRINTS" id="PR00417">
    <property type="entry name" value="PRTPISMRASEI"/>
</dbReference>
<dbReference type="SMART" id="SM00437">
    <property type="entry name" value="TOP1Ac"/>
    <property type="match status" value="1"/>
</dbReference>
<dbReference type="SMART" id="SM00436">
    <property type="entry name" value="TOP1Bc"/>
    <property type="match status" value="1"/>
</dbReference>
<dbReference type="SMART" id="SM00493">
    <property type="entry name" value="TOPRIM"/>
    <property type="match status" value="1"/>
</dbReference>
<dbReference type="SUPFAM" id="SSF56712">
    <property type="entry name" value="Prokaryotic type I DNA topoisomerase"/>
    <property type="match status" value="1"/>
</dbReference>
<dbReference type="PROSITE" id="PS00396">
    <property type="entry name" value="TOPO_IA_1"/>
    <property type="match status" value="1"/>
</dbReference>
<dbReference type="PROSITE" id="PS52039">
    <property type="entry name" value="TOPO_IA_2"/>
    <property type="match status" value="1"/>
</dbReference>
<dbReference type="PROSITE" id="PS50880">
    <property type="entry name" value="TOPRIM"/>
    <property type="match status" value="1"/>
</dbReference>